<name>CYNS_NOSS1</name>
<protein>
    <recommendedName>
        <fullName evidence="1">Cyanate hydratase</fullName>
        <shortName evidence="1">Cyanase</shortName>
        <ecNumber evidence="1">4.2.1.104</ecNumber>
    </recommendedName>
    <alternativeName>
        <fullName evidence="1">Cyanate hydrolase</fullName>
    </alternativeName>
    <alternativeName>
        <fullName evidence="1">Cyanate lyase</fullName>
    </alternativeName>
</protein>
<keyword id="KW-0456">Lyase</keyword>
<keyword id="KW-1185">Reference proteome</keyword>
<reference key="1">
    <citation type="journal article" date="2001" name="DNA Res.">
        <title>Complete genomic sequence of the filamentous nitrogen-fixing cyanobacterium Anabaena sp. strain PCC 7120.</title>
        <authorList>
            <person name="Kaneko T."/>
            <person name="Nakamura Y."/>
            <person name="Wolk C.P."/>
            <person name="Kuritz T."/>
            <person name="Sasamoto S."/>
            <person name="Watanabe A."/>
            <person name="Iriguchi M."/>
            <person name="Ishikawa A."/>
            <person name="Kawashima K."/>
            <person name="Kimura T."/>
            <person name="Kishida Y."/>
            <person name="Kohara M."/>
            <person name="Matsumoto M."/>
            <person name="Matsuno A."/>
            <person name="Muraki A."/>
            <person name="Nakazaki N."/>
            <person name="Shimpo S."/>
            <person name="Sugimoto M."/>
            <person name="Takazawa M."/>
            <person name="Yamada M."/>
            <person name="Yasuda M."/>
            <person name="Tabata S."/>
        </authorList>
    </citation>
    <scope>NUCLEOTIDE SEQUENCE [LARGE SCALE GENOMIC DNA]</scope>
    <source>
        <strain>PCC 7120 / SAG 25.82 / UTEX 2576</strain>
    </source>
</reference>
<organism>
    <name type="scientific">Nostoc sp. (strain PCC 7120 / SAG 25.82 / UTEX 2576)</name>
    <dbReference type="NCBI Taxonomy" id="103690"/>
    <lineage>
        <taxon>Bacteria</taxon>
        <taxon>Bacillati</taxon>
        <taxon>Cyanobacteriota</taxon>
        <taxon>Cyanophyceae</taxon>
        <taxon>Nostocales</taxon>
        <taxon>Nostocaceae</taxon>
        <taxon>Nostoc</taxon>
    </lineage>
</organism>
<accession>P58703</accession>
<proteinExistence type="inferred from homology"/>
<feature type="chain" id="PRO_0000187520" description="Cyanate hydratase">
    <location>
        <begin position="1"/>
        <end position="146"/>
    </location>
</feature>
<feature type="active site" evidence="1">
    <location>
        <position position="87"/>
    </location>
</feature>
<feature type="active site" evidence="1">
    <location>
        <position position="90"/>
    </location>
</feature>
<feature type="active site" evidence="1">
    <location>
        <position position="113"/>
    </location>
</feature>
<gene>
    <name evidence="1" type="primary">cynS</name>
    <name type="ordered locus">all1291</name>
</gene>
<sequence>MSIPEITQTLLQAKKDKGLSFADLEATLGRDEVCIAALFYRQASASEEEAKLLVEALGLDSSYIKHLTEYPVKGLGPVVPTDPLIYRFYEIMQVYGFPIKEVIQEKFGDGIMSAIDFTLDVEKEADPKGDRVKITMSGKFLPYKKW</sequence>
<evidence type="ECO:0000255" key="1">
    <source>
        <dbReference type="HAMAP-Rule" id="MF_00535"/>
    </source>
</evidence>
<comment type="function">
    <text evidence="1">Catalyzes the reaction of cyanate with bicarbonate to produce ammonia and carbon dioxide.</text>
</comment>
<comment type="catalytic activity">
    <reaction evidence="1">
        <text>cyanate + hydrogencarbonate + 3 H(+) = NH4(+) + 2 CO2</text>
        <dbReference type="Rhea" id="RHEA:11120"/>
        <dbReference type="ChEBI" id="CHEBI:15378"/>
        <dbReference type="ChEBI" id="CHEBI:16526"/>
        <dbReference type="ChEBI" id="CHEBI:17544"/>
        <dbReference type="ChEBI" id="CHEBI:28938"/>
        <dbReference type="ChEBI" id="CHEBI:29195"/>
        <dbReference type="EC" id="4.2.1.104"/>
    </reaction>
</comment>
<comment type="similarity">
    <text evidence="1">Belongs to the cyanase family.</text>
</comment>
<dbReference type="EC" id="4.2.1.104" evidence="1"/>
<dbReference type="EMBL" id="BA000019">
    <property type="protein sequence ID" value="BAB73248.1"/>
    <property type="molecule type" value="Genomic_DNA"/>
</dbReference>
<dbReference type="PIR" id="AH1967">
    <property type="entry name" value="AH1967"/>
</dbReference>
<dbReference type="RefSeq" id="WP_010995463.1">
    <property type="nucleotide sequence ID" value="NZ_RSCN01000021.1"/>
</dbReference>
<dbReference type="SMR" id="P58703"/>
<dbReference type="STRING" id="103690.gene:10493305"/>
<dbReference type="KEGG" id="ana:all1291"/>
<dbReference type="eggNOG" id="COG1513">
    <property type="taxonomic scope" value="Bacteria"/>
</dbReference>
<dbReference type="OrthoDB" id="9785870at2"/>
<dbReference type="Proteomes" id="UP000002483">
    <property type="component" value="Chromosome"/>
</dbReference>
<dbReference type="GO" id="GO:0008824">
    <property type="term" value="F:cyanate hydratase activity"/>
    <property type="evidence" value="ECO:0007669"/>
    <property type="project" value="UniProtKB-UniRule"/>
</dbReference>
<dbReference type="GO" id="GO:0003677">
    <property type="term" value="F:DNA binding"/>
    <property type="evidence" value="ECO:0007669"/>
    <property type="project" value="InterPro"/>
</dbReference>
<dbReference type="GO" id="GO:0009439">
    <property type="term" value="P:cyanate metabolic process"/>
    <property type="evidence" value="ECO:0007669"/>
    <property type="project" value="UniProtKB-UniRule"/>
</dbReference>
<dbReference type="CDD" id="cd00559">
    <property type="entry name" value="Cyanase_C"/>
    <property type="match status" value="1"/>
</dbReference>
<dbReference type="Gene3D" id="3.30.1160.10">
    <property type="entry name" value="Cyanate lyase, C-terminal domain"/>
    <property type="match status" value="1"/>
</dbReference>
<dbReference type="Gene3D" id="1.10.260.40">
    <property type="entry name" value="lambda repressor-like DNA-binding domains"/>
    <property type="match status" value="1"/>
</dbReference>
<dbReference type="HAMAP" id="MF_00535">
    <property type="entry name" value="Cyanate_hydrat"/>
    <property type="match status" value="1"/>
</dbReference>
<dbReference type="InterPro" id="IPR008076">
    <property type="entry name" value="Cyanase"/>
</dbReference>
<dbReference type="InterPro" id="IPR003712">
    <property type="entry name" value="Cyanate_lyase_C"/>
</dbReference>
<dbReference type="InterPro" id="IPR036581">
    <property type="entry name" value="Cyanate_lyase_C_sf"/>
</dbReference>
<dbReference type="InterPro" id="IPR010982">
    <property type="entry name" value="Lambda_DNA-bd_dom_sf"/>
</dbReference>
<dbReference type="NCBIfam" id="TIGR00673">
    <property type="entry name" value="cynS"/>
    <property type="match status" value="1"/>
</dbReference>
<dbReference type="NCBIfam" id="NF002773">
    <property type="entry name" value="PRK02866.1"/>
    <property type="match status" value="1"/>
</dbReference>
<dbReference type="PANTHER" id="PTHR34186">
    <property type="entry name" value="CYANATE HYDRATASE"/>
    <property type="match status" value="1"/>
</dbReference>
<dbReference type="PANTHER" id="PTHR34186:SF2">
    <property type="entry name" value="CYANATE HYDRATASE"/>
    <property type="match status" value="1"/>
</dbReference>
<dbReference type="Pfam" id="PF02560">
    <property type="entry name" value="Cyanate_lyase"/>
    <property type="match status" value="1"/>
</dbReference>
<dbReference type="PIRSF" id="PIRSF001263">
    <property type="entry name" value="Cyanate_hydratas"/>
    <property type="match status" value="1"/>
</dbReference>
<dbReference type="PRINTS" id="PR01693">
    <property type="entry name" value="CYANASE"/>
</dbReference>
<dbReference type="SMART" id="SM01116">
    <property type="entry name" value="Cyanate_lyase"/>
    <property type="match status" value="1"/>
</dbReference>
<dbReference type="SUPFAM" id="SSF55234">
    <property type="entry name" value="Cyanase C-terminal domain"/>
    <property type="match status" value="1"/>
</dbReference>
<dbReference type="SUPFAM" id="SSF47413">
    <property type="entry name" value="lambda repressor-like DNA-binding domains"/>
    <property type="match status" value="1"/>
</dbReference>